<protein>
    <recommendedName>
        <fullName evidence="4">Macroconotoxin Mu8.1</fullName>
    </recommendedName>
    <alternativeName>
        <fullName evidence="4">Mu8.1ii</fullName>
    </alternativeName>
</protein>
<accession>P0DRC4</accession>
<reference evidence="8 9 10 11" key="1">
    <citation type="journal article" date="2023" name="PLoS Biol.">
        <title>A previously unrecognized superfamily of macro-conotoxins includes an inhibitor of the sensory neuron calcium channel Cav2.3.</title>
        <authorList>
            <person name="Hackney C.M."/>
            <person name="Florez Salcedo P."/>
            <person name="Mueller E."/>
            <person name="Koch T.L."/>
            <person name="Kjelgaard L.D."/>
            <person name="Watkins M."/>
            <person name="Zachariassen L.G."/>
            <person name="Tuelung P.S."/>
            <person name="McArthur J.R."/>
            <person name="Adams D.J."/>
            <person name="Kristensen A.S."/>
            <person name="Olivera B."/>
            <person name="Finol-Urdaneta R.K."/>
            <person name="Safavi-Hemami H."/>
            <person name="Morth J.P."/>
            <person name="Ellgaard L."/>
        </authorList>
    </citation>
    <scope>NUCLEOTIDE SEQUENCE [MRNA]</scope>
    <scope>FUNCTION</scope>
    <scope>VARIANTS ARG-110; ASP-113 AND VAL-114</scope>
    <scope>RECOMBINANT EXPRESSION</scope>
    <scope>SUBUNIT</scope>
    <scope>DISULFIDE BONDS</scope>
    <scope>X-RAY CRYSTALLOGRAPHY (2.12 ANGSTROMS) OF 32-115</scope>
    <source>
        <tissue>Venom duct</tissue>
    </source>
</reference>
<reference evidence="12" key="2">
    <citation type="journal article" date="2023" name="Acta Crystallogr. F Struct. Biol. Commun.">
        <title>High-resolution crystal structure of the Mu8.1 conotoxin from Conus mucronatus.</title>
        <authorList>
            <person name="Mueller E."/>
            <person name="Hackney C.M."/>
            <person name="Ellgaard L."/>
            <person name="Morth J.P."/>
        </authorList>
    </citation>
    <scope>X-RAY CRYSTALLOGRAPHY (1.67 ANGSTROMS) OF 32-115</scope>
    <scope>RECOMBINANT EXPRESSION</scope>
    <scope>DISULFIDE BONDS</scope>
</reference>
<comment type="function">
    <text evidence="2">Modestly and reversibly inhibits Cav2.3/CACNA1E (IC(50)=5.8 uM) recombinantly expressed in HEK293 cells without affecting the voltage dependence of activation. In mouse DRG sensory neurons, modulates depolarization-induced calcium influx.</text>
</comment>
<comment type="subunit">
    <text evidence="2 3">Mostly found as a homodimer in solution; non-covalently bound.</text>
</comment>
<comment type="subcellular location">
    <subcellularLocation>
        <location evidence="6">Secreted</location>
    </subcellularLocation>
</comment>
<comment type="tissue specificity">
    <text evidence="6">Expressed by the venom duct.</text>
</comment>
<comment type="domain">
    <text evidence="5">The cysteine framework is VIII (C-C-C-C-C-C-C-C-C-C).</text>
</comment>
<comment type="miscellaneous">
    <text evidence="2">Negative results: does not modulate desensitization of the ionotropic glutamate receptor AMPA GRIA2, despite its high degree of structural similarity to Conus striatus con-ikot-ikot (AC P0CB20) which blocks desensitization of these receptor types. Shows no inhibition on Cav1.2/CACNA1A, Nav1.4/SCN4A, Nav1.7/SCN9A, Kv11.1/KCNH2, Kv1.2/KCNA2, Kv1.3/KCNA3, Kv4.3/KCND3 channels. Shows very weak inhibition (IC(50)&gt;30 uM) on Cav2.1/CACNA1A, Cav2.2/CACNA1B, Cav3.1/CACNA1G, Cav3.2/CACNA1H, Cav3.3/CACNA1I, Kv1.1/KCNA1, and Kv1.2/KCNA2. Does not modulate all recombinant GPCRs tested (more than 50).</text>
</comment>
<feature type="signal peptide" evidence="1">
    <location>
        <begin position="1"/>
        <end position="21"/>
    </location>
</feature>
<feature type="propeptide" id="PRO_0000459523" evidence="5">
    <location>
        <begin position="22"/>
        <end position="26"/>
    </location>
</feature>
<feature type="chain" id="PRO_0000459524" description="Macroconotoxin Mu8.1">
    <location>
        <begin position="27"/>
        <end position="115"/>
    </location>
</feature>
<feature type="binding site" evidence="7 15">
    <location>
        <position position="40"/>
    </location>
    <ligand>
        <name>Zn(2+)</name>
        <dbReference type="ChEBI" id="CHEBI:29105"/>
    </ligand>
</feature>
<feature type="binding site" evidence="7 15">
    <location>
        <position position="68"/>
    </location>
    <ligand>
        <name>Zn(2+)</name>
        <dbReference type="ChEBI" id="CHEBI:29105"/>
    </ligand>
</feature>
<feature type="disulfide bond" evidence="6 7 13 14 15">
    <location>
        <begin position="36"/>
        <end position="77"/>
    </location>
</feature>
<feature type="disulfide bond" evidence="6 7 13 14 15">
    <location>
        <begin position="44"/>
        <end position="60"/>
    </location>
</feature>
<feature type="disulfide bond" evidence="6 7 13 14 15">
    <location>
        <begin position="48"/>
        <end position="56"/>
    </location>
</feature>
<feature type="disulfide bond" evidence="6 7 13 14 15">
    <location>
        <begin position="83"/>
        <end position="115"/>
    </location>
</feature>
<feature type="disulfide bond" evidence="6 7 13 14 15">
    <location>
        <begin position="87"/>
        <end position="97"/>
    </location>
</feature>
<feature type="sequence variant" evidence="6">
    <original>G</original>
    <variation>R</variation>
    <location>
        <position position="110"/>
    </location>
</feature>
<feature type="sequence variant" evidence="6">
    <original>E</original>
    <variation>D</variation>
    <location>
        <position position="113"/>
    </location>
</feature>
<feature type="sequence variant" evidence="6">
    <original>F</original>
    <variation>V</variation>
    <location>
        <position position="114"/>
    </location>
</feature>
<feature type="helix" evidence="16">
    <location>
        <begin position="34"/>
        <end position="36"/>
    </location>
</feature>
<feature type="helix" evidence="16">
    <location>
        <begin position="38"/>
        <end position="50"/>
    </location>
</feature>
<feature type="helix" evidence="16">
    <location>
        <begin position="56"/>
        <end position="68"/>
    </location>
</feature>
<feature type="helix" evidence="16">
    <location>
        <begin position="70"/>
        <end position="73"/>
    </location>
</feature>
<feature type="helix" evidence="16">
    <location>
        <begin position="75"/>
        <end position="89"/>
    </location>
</feature>
<feature type="helix" evidence="16">
    <location>
        <begin position="94"/>
        <end position="104"/>
    </location>
</feature>
<feature type="helix" evidence="16">
    <location>
        <begin position="109"/>
        <end position="113"/>
    </location>
</feature>
<name>CON81_CONMM</name>
<proteinExistence type="evidence at protein level"/>
<dbReference type="EMBL" id="ON755370">
    <property type="protein sequence ID" value="WCO04037.1"/>
    <property type="molecule type" value="mRNA"/>
</dbReference>
<dbReference type="EMBL" id="ON755371">
    <property type="protein sequence ID" value="WCO04038.1"/>
    <property type="molecule type" value="mRNA"/>
</dbReference>
<dbReference type="PDB" id="7PX1">
    <property type="method" value="X-ray"/>
    <property type="resolution" value="2.33 A"/>
    <property type="chains" value="A/B=32-115"/>
</dbReference>
<dbReference type="PDB" id="7PX2">
    <property type="method" value="X-ray"/>
    <property type="resolution" value="2.12 A"/>
    <property type="chains" value="A/B/C/D/E/F/G/H=32-115"/>
</dbReference>
<dbReference type="PDB" id="8AMY">
    <property type="method" value="X-ray"/>
    <property type="resolution" value="1.67 A"/>
    <property type="chains" value="A=32-115"/>
</dbReference>
<dbReference type="PDBsum" id="7PX1"/>
<dbReference type="PDBsum" id="7PX2"/>
<dbReference type="PDBsum" id="8AMY"/>
<dbReference type="SMR" id="P0DRC4"/>
<dbReference type="GO" id="GO:0005576">
    <property type="term" value="C:extracellular region"/>
    <property type="evidence" value="ECO:0007669"/>
    <property type="project" value="UniProtKB-SubCell"/>
</dbReference>
<dbReference type="GO" id="GO:0005246">
    <property type="term" value="F:calcium channel regulator activity"/>
    <property type="evidence" value="ECO:0007669"/>
    <property type="project" value="UniProtKB-KW"/>
</dbReference>
<dbReference type="GO" id="GO:0046872">
    <property type="term" value="F:metal ion binding"/>
    <property type="evidence" value="ECO:0007669"/>
    <property type="project" value="UniProtKB-KW"/>
</dbReference>
<dbReference type="GO" id="GO:0090729">
    <property type="term" value="F:toxin activity"/>
    <property type="evidence" value="ECO:0007669"/>
    <property type="project" value="UniProtKB-KW"/>
</dbReference>
<organism>
    <name type="scientific">Conus mucronatus</name>
    <name type="common">Pointed cone</name>
    <name type="synonym">Phasmoconus mucronatus</name>
    <dbReference type="NCBI Taxonomy" id="1127826"/>
    <lineage>
        <taxon>Eukaryota</taxon>
        <taxon>Metazoa</taxon>
        <taxon>Spiralia</taxon>
        <taxon>Lophotrochozoa</taxon>
        <taxon>Mollusca</taxon>
        <taxon>Gastropoda</taxon>
        <taxon>Caenogastropoda</taxon>
        <taxon>Neogastropoda</taxon>
        <taxon>Conoidea</taxon>
        <taxon>Conidae</taxon>
        <taxon>Conus</taxon>
        <taxon>Phasmoconus</taxon>
    </lineage>
</organism>
<sequence>MDMKMTFSGLVLVVLVTTVVGSSVRRGENSDNLTHCRLFEFRLCLLECMSLTLDHCYARCTTVITQIHGSDTNRFDCTIFKTCYYRCYVLGKTEDHCWKGTATSVTGDVGDLEFC</sequence>
<evidence type="ECO:0000255" key="1"/>
<evidence type="ECO:0000269" key="2">
    <source>
    </source>
</evidence>
<evidence type="ECO:0000269" key="3">
    <source>
    </source>
</evidence>
<evidence type="ECO:0000303" key="4">
    <source>
    </source>
</evidence>
<evidence type="ECO:0000305" key="5"/>
<evidence type="ECO:0000305" key="6">
    <source>
    </source>
</evidence>
<evidence type="ECO:0000305" key="7">
    <source>
    </source>
</evidence>
<evidence type="ECO:0000312" key="8">
    <source>
        <dbReference type="EMBL" id="WCO04037.1"/>
    </source>
</evidence>
<evidence type="ECO:0000312" key="9">
    <source>
        <dbReference type="EMBL" id="WCO04038.1"/>
    </source>
</evidence>
<evidence type="ECO:0000312" key="10">
    <source>
        <dbReference type="PDB" id="7PX1"/>
    </source>
</evidence>
<evidence type="ECO:0000312" key="11">
    <source>
        <dbReference type="PDB" id="7PX2"/>
    </source>
</evidence>
<evidence type="ECO:0000312" key="12">
    <source>
        <dbReference type="PDB" id="8AMY"/>
    </source>
</evidence>
<evidence type="ECO:0007744" key="13">
    <source>
        <dbReference type="PDB" id="7PX1"/>
    </source>
</evidence>
<evidence type="ECO:0007744" key="14">
    <source>
        <dbReference type="PDB" id="7PX2"/>
    </source>
</evidence>
<evidence type="ECO:0007744" key="15">
    <source>
        <dbReference type="PDB" id="8AMY"/>
    </source>
</evidence>
<evidence type="ECO:0007829" key="16">
    <source>
        <dbReference type="PDB" id="8AMY"/>
    </source>
</evidence>
<keyword id="KW-0002">3D-structure</keyword>
<keyword id="KW-0108">Calcium channel impairing toxin</keyword>
<keyword id="KW-1015">Disulfide bond</keyword>
<keyword id="KW-0872">Ion channel impairing toxin</keyword>
<keyword id="KW-0479">Metal-binding</keyword>
<keyword id="KW-0964">Secreted</keyword>
<keyword id="KW-0732">Signal</keyword>
<keyword id="KW-0800">Toxin</keyword>
<keyword id="KW-1218">Voltage-gated calcium channel impairing toxin</keyword>